<name>MOAA_THEYD</name>
<feature type="chain" id="PRO_1000139351" description="GTP 3',8-cyclase">
    <location>
        <begin position="1"/>
        <end position="322"/>
    </location>
</feature>
<feature type="domain" description="Radical SAM core" evidence="2">
    <location>
        <begin position="4"/>
        <end position="229"/>
    </location>
</feature>
<feature type="binding site" evidence="1">
    <location>
        <position position="13"/>
    </location>
    <ligand>
        <name>GTP</name>
        <dbReference type="ChEBI" id="CHEBI:37565"/>
    </ligand>
</feature>
<feature type="binding site" evidence="1">
    <location>
        <position position="20"/>
    </location>
    <ligand>
        <name>[4Fe-4S] cluster</name>
        <dbReference type="ChEBI" id="CHEBI:49883"/>
        <label>1</label>
        <note>4Fe-4S-S-AdoMet</note>
    </ligand>
</feature>
<feature type="binding site" evidence="1">
    <location>
        <position position="24"/>
    </location>
    <ligand>
        <name>[4Fe-4S] cluster</name>
        <dbReference type="ChEBI" id="CHEBI:49883"/>
        <label>1</label>
        <note>4Fe-4S-S-AdoMet</note>
    </ligand>
</feature>
<feature type="binding site" evidence="1">
    <location>
        <position position="26"/>
    </location>
    <ligand>
        <name>S-adenosyl-L-methionine</name>
        <dbReference type="ChEBI" id="CHEBI:59789"/>
    </ligand>
</feature>
<feature type="binding site" evidence="1">
    <location>
        <position position="27"/>
    </location>
    <ligand>
        <name>[4Fe-4S] cluster</name>
        <dbReference type="ChEBI" id="CHEBI:49883"/>
        <label>1</label>
        <note>4Fe-4S-S-AdoMet</note>
    </ligand>
</feature>
<feature type="binding site" evidence="1">
    <location>
        <position position="64"/>
    </location>
    <ligand>
        <name>GTP</name>
        <dbReference type="ChEBI" id="CHEBI:37565"/>
    </ligand>
</feature>
<feature type="binding site" evidence="1">
    <location>
        <position position="68"/>
    </location>
    <ligand>
        <name>S-adenosyl-L-methionine</name>
        <dbReference type="ChEBI" id="CHEBI:59789"/>
    </ligand>
</feature>
<feature type="binding site" evidence="1">
    <location>
        <position position="95"/>
    </location>
    <ligand>
        <name>GTP</name>
        <dbReference type="ChEBI" id="CHEBI:37565"/>
    </ligand>
</feature>
<feature type="binding site" evidence="1">
    <location>
        <position position="119"/>
    </location>
    <ligand>
        <name>S-adenosyl-L-methionine</name>
        <dbReference type="ChEBI" id="CHEBI:59789"/>
    </ligand>
</feature>
<feature type="binding site" evidence="1">
    <location>
        <position position="156"/>
    </location>
    <ligand>
        <name>GTP</name>
        <dbReference type="ChEBI" id="CHEBI:37565"/>
    </ligand>
</feature>
<feature type="binding site" evidence="1">
    <location>
        <position position="190"/>
    </location>
    <ligand>
        <name>S-adenosyl-L-methionine</name>
        <dbReference type="ChEBI" id="CHEBI:59789"/>
    </ligand>
</feature>
<feature type="binding site" evidence="1">
    <location>
        <position position="253"/>
    </location>
    <ligand>
        <name>[4Fe-4S] cluster</name>
        <dbReference type="ChEBI" id="CHEBI:49883"/>
        <label>2</label>
        <note>4Fe-4S-substrate</note>
    </ligand>
</feature>
<feature type="binding site" evidence="1">
    <location>
        <position position="256"/>
    </location>
    <ligand>
        <name>[4Fe-4S] cluster</name>
        <dbReference type="ChEBI" id="CHEBI:49883"/>
        <label>2</label>
        <note>4Fe-4S-substrate</note>
    </ligand>
</feature>
<feature type="binding site" evidence="1">
    <location>
        <begin position="258"/>
        <end position="260"/>
    </location>
    <ligand>
        <name>GTP</name>
        <dbReference type="ChEBI" id="CHEBI:37565"/>
    </ligand>
</feature>
<feature type="binding site" evidence="1">
    <location>
        <position position="270"/>
    </location>
    <ligand>
        <name>[4Fe-4S] cluster</name>
        <dbReference type="ChEBI" id="CHEBI:49883"/>
        <label>2</label>
        <note>4Fe-4S-substrate</note>
    </ligand>
</feature>
<organism>
    <name type="scientific">Thermodesulfovibrio yellowstonii (strain ATCC 51303 / DSM 11347 / YP87)</name>
    <dbReference type="NCBI Taxonomy" id="289376"/>
    <lineage>
        <taxon>Bacteria</taxon>
        <taxon>Pseudomonadati</taxon>
        <taxon>Nitrospirota</taxon>
        <taxon>Thermodesulfovibrionia</taxon>
        <taxon>Thermodesulfovibrionales</taxon>
        <taxon>Thermodesulfovibrionaceae</taxon>
        <taxon>Thermodesulfovibrio</taxon>
    </lineage>
</organism>
<evidence type="ECO:0000255" key="1">
    <source>
        <dbReference type="HAMAP-Rule" id="MF_01225"/>
    </source>
</evidence>
<evidence type="ECO:0000255" key="2">
    <source>
        <dbReference type="PROSITE-ProRule" id="PRU01266"/>
    </source>
</evidence>
<sequence>MKDNFNRNIDYLRISIIDRCNLRCIYCMPEEGITNLLPHHEILSYEEILKIVEIGVDLGITKIRITGGEPLLRKGIVSFIERLARIEGIRDIGMTTNGVLLKKFAKDLYNAGLKRVNVSLDSLDENKFRAITRVGLIDDVFEGIDEAKNAGLQPVKVNVVVMKGINDDEIEKFALWSKKVEYQIRFIEFMPVGQNAWKKELFISKDEIKERIENKIGKLIPVQMKKSGPAEYFMLAGAKGFLGFISPMTTHICVRCNRLRLTADGKLRPCLFSDKEVDIKKILRSGASTEEIRETIIKTIHLKPQGMSEHTKPLRPMSTIGG</sequence>
<protein>
    <recommendedName>
        <fullName evidence="1">GTP 3',8-cyclase</fullName>
        <ecNumber evidence="1">4.1.99.22</ecNumber>
    </recommendedName>
    <alternativeName>
        <fullName evidence="1">Molybdenum cofactor biosynthesis protein A</fullName>
    </alternativeName>
</protein>
<comment type="function">
    <text evidence="1">Catalyzes the cyclization of GTP to (8S)-3',8-cyclo-7,8-dihydroguanosine 5'-triphosphate.</text>
</comment>
<comment type="catalytic activity">
    <reaction evidence="1">
        <text>GTP + AH2 + S-adenosyl-L-methionine = (8S)-3',8-cyclo-7,8-dihydroguanosine 5'-triphosphate + 5'-deoxyadenosine + L-methionine + A + H(+)</text>
        <dbReference type="Rhea" id="RHEA:49576"/>
        <dbReference type="ChEBI" id="CHEBI:13193"/>
        <dbReference type="ChEBI" id="CHEBI:15378"/>
        <dbReference type="ChEBI" id="CHEBI:17319"/>
        <dbReference type="ChEBI" id="CHEBI:17499"/>
        <dbReference type="ChEBI" id="CHEBI:37565"/>
        <dbReference type="ChEBI" id="CHEBI:57844"/>
        <dbReference type="ChEBI" id="CHEBI:59789"/>
        <dbReference type="ChEBI" id="CHEBI:131766"/>
        <dbReference type="EC" id="4.1.99.22"/>
    </reaction>
</comment>
<comment type="cofactor">
    <cofactor evidence="1">
        <name>[4Fe-4S] cluster</name>
        <dbReference type="ChEBI" id="CHEBI:49883"/>
    </cofactor>
    <text evidence="1">Binds 2 [4Fe-4S] clusters. Binds 1 [4Fe-4S] cluster coordinated with 3 cysteines and an exchangeable S-adenosyl-L-methionine and 1 [4Fe-4S] cluster coordinated with 3 cysteines and the GTP-derived substrate.</text>
</comment>
<comment type="pathway">
    <text evidence="1">Cofactor biosynthesis; molybdopterin biosynthesis.</text>
</comment>
<comment type="subunit">
    <text evidence="1">Monomer and homodimer.</text>
</comment>
<comment type="similarity">
    <text evidence="1">Belongs to the radical SAM superfamily. MoaA family.</text>
</comment>
<reference key="1">
    <citation type="submission" date="2008-08" db="EMBL/GenBank/DDBJ databases">
        <title>The complete genome sequence of Thermodesulfovibrio yellowstonii strain ATCC 51303 / DSM 11347 / YP87.</title>
        <authorList>
            <person name="Dodson R.J."/>
            <person name="Durkin A.S."/>
            <person name="Wu M."/>
            <person name="Eisen J."/>
            <person name="Sutton G."/>
        </authorList>
    </citation>
    <scope>NUCLEOTIDE SEQUENCE [LARGE SCALE GENOMIC DNA]</scope>
    <source>
        <strain>ATCC 51303 / DSM 11347 / YP87</strain>
    </source>
</reference>
<accession>B5YJ09</accession>
<proteinExistence type="inferred from homology"/>
<dbReference type="EC" id="4.1.99.22" evidence="1"/>
<dbReference type="EMBL" id="CP001147">
    <property type="protein sequence ID" value="ACI21407.1"/>
    <property type="molecule type" value="Genomic_DNA"/>
</dbReference>
<dbReference type="RefSeq" id="WP_012546124.1">
    <property type="nucleotide sequence ID" value="NC_011296.1"/>
</dbReference>
<dbReference type="RefSeq" id="YP_002249883.1">
    <property type="nucleotide sequence ID" value="NC_011296.1"/>
</dbReference>
<dbReference type="SMR" id="B5YJ09"/>
<dbReference type="FunCoup" id="B5YJ09">
    <property type="interactions" value="339"/>
</dbReference>
<dbReference type="STRING" id="289376.THEYE_A2096"/>
<dbReference type="EnsemblBacteria" id="ACI21407">
    <property type="protein sequence ID" value="ACI21407"/>
    <property type="gene ID" value="THEYE_A2096"/>
</dbReference>
<dbReference type="KEGG" id="tye:THEYE_A2096"/>
<dbReference type="PATRIC" id="fig|289376.4.peg.2044"/>
<dbReference type="eggNOG" id="COG2896">
    <property type="taxonomic scope" value="Bacteria"/>
</dbReference>
<dbReference type="HOGENOM" id="CLU_009273_0_1_0"/>
<dbReference type="InParanoid" id="B5YJ09"/>
<dbReference type="OrthoDB" id="9763993at2"/>
<dbReference type="UniPathway" id="UPA00344"/>
<dbReference type="Proteomes" id="UP000000718">
    <property type="component" value="Chromosome"/>
</dbReference>
<dbReference type="GO" id="GO:0051539">
    <property type="term" value="F:4 iron, 4 sulfur cluster binding"/>
    <property type="evidence" value="ECO:0007669"/>
    <property type="project" value="UniProtKB-UniRule"/>
</dbReference>
<dbReference type="GO" id="GO:0061799">
    <property type="term" value="F:cyclic pyranopterin monophosphate synthase activity"/>
    <property type="evidence" value="ECO:0000318"/>
    <property type="project" value="GO_Central"/>
</dbReference>
<dbReference type="GO" id="GO:0061798">
    <property type="term" value="F:GTP 3',8'-cyclase activity"/>
    <property type="evidence" value="ECO:0000318"/>
    <property type="project" value="GO_Central"/>
</dbReference>
<dbReference type="GO" id="GO:0005525">
    <property type="term" value="F:GTP binding"/>
    <property type="evidence" value="ECO:0007669"/>
    <property type="project" value="UniProtKB-UniRule"/>
</dbReference>
<dbReference type="GO" id="GO:0046872">
    <property type="term" value="F:metal ion binding"/>
    <property type="evidence" value="ECO:0007669"/>
    <property type="project" value="UniProtKB-KW"/>
</dbReference>
<dbReference type="GO" id="GO:1904047">
    <property type="term" value="F:S-adenosyl-L-methionine binding"/>
    <property type="evidence" value="ECO:0007669"/>
    <property type="project" value="UniProtKB-UniRule"/>
</dbReference>
<dbReference type="GO" id="GO:0006777">
    <property type="term" value="P:Mo-molybdopterin cofactor biosynthetic process"/>
    <property type="evidence" value="ECO:0000318"/>
    <property type="project" value="GO_Central"/>
</dbReference>
<dbReference type="CDD" id="cd01335">
    <property type="entry name" value="Radical_SAM"/>
    <property type="match status" value="1"/>
</dbReference>
<dbReference type="CDD" id="cd21117">
    <property type="entry name" value="Twitch_MoaA"/>
    <property type="match status" value="1"/>
</dbReference>
<dbReference type="Gene3D" id="3.20.20.70">
    <property type="entry name" value="Aldolase class I"/>
    <property type="match status" value="1"/>
</dbReference>
<dbReference type="HAMAP" id="MF_01225_B">
    <property type="entry name" value="MoaA_B"/>
    <property type="match status" value="1"/>
</dbReference>
<dbReference type="InterPro" id="IPR013785">
    <property type="entry name" value="Aldolase_TIM"/>
</dbReference>
<dbReference type="InterPro" id="IPR006638">
    <property type="entry name" value="Elp3/MiaA/NifB-like_rSAM"/>
</dbReference>
<dbReference type="InterPro" id="IPR013483">
    <property type="entry name" value="MoaA"/>
</dbReference>
<dbReference type="InterPro" id="IPR000385">
    <property type="entry name" value="MoaA_NifB_PqqE_Fe-S-bd_CS"/>
</dbReference>
<dbReference type="InterPro" id="IPR010505">
    <property type="entry name" value="MoaA_twitch"/>
</dbReference>
<dbReference type="InterPro" id="IPR050105">
    <property type="entry name" value="MoCo_biosynth_MoaA/MoaC"/>
</dbReference>
<dbReference type="InterPro" id="IPR007197">
    <property type="entry name" value="rSAM"/>
</dbReference>
<dbReference type="NCBIfam" id="TIGR02666">
    <property type="entry name" value="moaA"/>
    <property type="match status" value="1"/>
</dbReference>
<dbReference type="NCBIfam" id="NF001199">
    <property type="entry name" value="PRK00164.2-1"/>
    <property type="match status" value="1"/>
</dbReference>
<dbReference type="PANTHER" id="PTHR22960:SF0">
    <property type="entry name" value="MOLYBDENUM COFACTOR BIOSYNTHESIS PROTEIN 1"/>
    <property type="match status" value="1"/>
</dbReference>
<dbReference type="PANTHER" id="PTHR22960">
    <property type="entry name" value="MOLYBDOPTERIN COFACTOR SYNTHESIS PROTEIN A"/>
    <property type="match status" value="1"/>
</dbReference>
<dbReference type="Pfam" id="PF06463">
    <property type="entry name" value="Mob_synth_C"/>
    <property type="match status" value="1"/>
</dbReference>
<dbReference type="Pfam" id="PF04055">
    <property type="entry name" value="Radical_SAM"/>
    <property type="match status" value="1"/>
</dbReference>
<dbReference type="SFLD" id="SFLDG01383">
    <property type="entry name" value="cyclic_pyranopterin_phosphate"/>
    <property type="match status" value="1"/>
</dbReference>
<dbReference type="SFLD" id="SFLDG01216">
    <property type="entry name" value="thioether_bond_formation_requi"/>
    <property type="match status" value="1"/>
</dbReference>
<dbReference type="SMART" id="SM00729">
    <property type="entry name" value="Elp3"/>
    <property type="match status" value="1"/>
</dbReference>
<dbReference type="SUPFAM" id="SSF102114">
    <property type="entry name" value="Radical SAM enzymes"/>
    <property type="match status" value="1"/>
</dbReference>
<dbReference type="PROSITE" id="PS01305">
    <property type="entry name" value="MOAA_NIFB_PQQE"/>
    <property type="match status" value="1"/>
</dbReference>
<dbReference type="PROSITE" id="PS51918">
    <property type="entry name" value="RADICAL_SAM"/>
    <property type="match status" value="1"/>
</dbReference>
<keyword id="KW-0004">4Fe-4S</keyword>
<keyword id="KW-0342">GTP-binding</keyword>
<keyword id="KW-0408">Iron</keyword>
<keyword id="KW-0411">Iron-sulfur</keyword>
<keyword id="KW-0456">Lyase</keyword>
<keyword id="KW-0479">Metal-binding</keyword>
<keyword id="KW-0501">Molybdenum cofactor biosynthesis</keyword>
<keyword id="KW-0547">Nucleotide-binding</keyword>
<keyword id="KW-1185">Reference proteome</keyword>
<keyword id="KW-0949">S-adenosyl-L-methionine</keyword>
<gene>
    <name evidence="1" type="primary">moaA</name>
    <name type="ordered locus">THEYE_A2096</name>
</gene>